<accession>Q9JWK3</accession>
<accession>A1IPG5</accession>
<protein>
    <recommendedName>
        <fullName evidence="1">Probable malate:quinone oxidoreductase</fullName>
        <ecNumber evidence="1">1.1.5.4</ecNumber>
    </recommendedName>
    <alternativeName>
        <fullName evidence="1">MQO</fullName>
    </alternativeName>
    <alternativeName>
        <fullName evidence="1">Malate dehydrogenase [quinone]</fullName>
    </alternativeName>
</protein>
<gene>
    <name evidence="1" type="primary">mqo</name>
    <name type="ordered locus">NMA0333</name>
</gene>
<organism>
    <name type="scientific">Neisseria meningitidis serogroup A / serotype 4A (strain DSM 15465 / Z2491)</name>
    <dbReference type="NCBI Taxonomy" id="122587"/>
    <lineage>
        <taxon>Bacteria</taxon>
        <taxon>Pseudomonadati</taxon>
        <taxon>Pseudomonadota</taxon>
        <taxon>Betaproteobacteria</taxon>
        <taxon>Neisseriales</taxon>
        <taxon>Neisseriaceae</taxon>
        <taxon>Neisseria</taxon>
    </lineage>
</organism>
<reference key="1">
    <citation type="journal article" date="2000" name="Nature">
        <title>Complete DNA sequence of a serogroup A strain of Neisseria meningitidis Z2491.</title>
        <authorList>
            <person name="Parkhill J."/>
            <person name="Achtman M."/>
            <person name="James K.D."/>
            <person name="Bentley S.D."/>
            <person name="Churcher C.M."/>
            <person name="Klee S.R."/>
            <person name="Morelli G."/>
            <person name="Basham D."/>
            <person name="Brown D."/>
            <person name="Chillingworth T."/>
            <person name="Davies R.M."/>
            <person name="Davis P."/>
            <person name="Devlin K."/>
            <person name="Feltwell T."/>
            <person name="Hamlin N."/>
            <person name="Holroyd S."/>
            <person name="Jagels K."/>
            <person name="Leather S."/>
            <person name="Moule S."/>
            <person name="Mungall K.L."/>
            <person name="Quail M.A."/>
            <person name="Rajandream M.A."/>
            <person name="Rutherford K.M."/>
            <person name="Simmonds M."/>
            <person name="Skelton J."/>
            <person name="Whitehead S."/>
            <person name="Spratt B.G."/>
            <person name="Barrell B.G."/>
        </authorList>
    </citation>
    <scope>NUCLEOTIDE SEQUENCE [LARGE SCALE GENOMIC DNA]</scope>
    <source>
        <strain>DSM 15465 / Z2491</strain>
    </source>
</reference>
<sequence length="488" mass="53993">MAEATDVVLVGGGIMSATLGVLLKELEPSWEITLIERLEDVALESSNAWNNAGTGHSALCELNYAPLGANGIIDPARALNIAEQFHVSRQFWATLVAEGKLEDNSFINAVPHMSLVMNEDHCSYLQKRYDAFKTQKLFENMEFSTDRNKISDWAPLMMRGRDENQPVAANYSAEGTDVDFGRLTRQMVKYLQGKGVKTEFNRHVEDIKRESDGAWVLKTADTRNPDGQLTLRTRFLFLGAGGGALTLLQKSGIPEGKGYGGFPVSGLFFRNSNPETAEQHNAKVYGQASVGAPPMSVPHLDTRNVDGKRHLMFGPYAGFRSNFLKQGSLMDLPLSIHMDNLYPMLRAGWANMPLTKYLLGELRKTKEERFASLLEYYPEANPDDWELITAGQRVQIIKKDSEKGGVLQFGTEIVAHADGSLAALLGASPGASTAVPLMIRLMHQCFPERTPSWEGRLKELVPGYGIKLNENPERADEIIAYTAKVLDI</sequence>
<proteinExistence type="inferred from homology"/>
<evidence type="ECO:0000255" key="1">
    <source>
        <dbReference type="HAMAP-Rule" id="MF_00212"/>
    </source>
</evidence>
<keyword id="KW-0274">FAD</keyword>
<keyword id="KW-0285">Flavoprotein</keyword>
<keyword id="KW-0560">Oxidoreductase</keyword>
<keyword id="KW-0816">Tricarboxylic acid cycle</keyword>
<feature type="chain" id="PRO_0000128723" description="Probable malate:quinone oxidoreductase">
    <location>
        <begin position="1"/>
        <end position="488"/>
    </location>
</feature>
<comment type="catalytic activity">
    <reaction evidence="1">
        <text>(S)-malate + a quinone = a quinol + oxaloacetate</text>
        <dbReference type="Rhea" id="RHEA:46012"/>
        <dbReference type="ChEBI" id="CHEBI:15589"/>
        <dbReference type="ChEBI" id="CHEBI:16452"/>
        <dbReference type="ChEBI" id="CHEBI:24646"/>
        <dbReference type="ChEBI" id="CHEBI:132124"/>
        <dbReference type="EC" id="1.1.5.4"/>
    </reaction>
</comment>
<comment type="cofactor">
    <cofactor evidence="1">
        <name>FAD</name>
        <dbReference type="ChEBI" id="CHEBI:57692"/>
    </cofactor>
</comment>
<comment type="pathway">
    <text evidence="1">Carbohydrate metabolism; tricarboxylic acid cycle; oxaloacetate from (S)-malate (quinone route): step 1/1.</text>
</comment>
<comment type="similarity">
    <text evidence="1">Belongs to the MQO family.</text>
</comment>
<dbReference type="EC" id="1.1.5.4" evidence="1"/>
<dbReference type="EMBL" id="AL157959">
    <property type="protein sequence ID" value="CAM07634.1"/>
    <property type="molecule type" value="Genomic_DNA"/>
</dbReference>
<dbReference type="PIR" id="B82029">
    <property type="entry name" value="B82029"/>
</dbReference>
<dbReference type="RefSeq" id="WP_002246529.1">
    <property type="nucleotide sequence ID" value="NC_003116.1"/>
</dbReference>
<dbReference type="SMR" id="Q9JWK3"/>
<dbReference type="EnsemblBacteria" id="CAM07634">
    <property type="protein sequence ID" value="CAM07634"/>
    <property type="gene ID" value="NMA0333"/>
</dbReference>
<dbReference type="KEGG" id="nma:NMA0333"/>
<dbReference type="HOGENOM" id="CLU_028151_0_0_4"/>
<dbReference type="UniPathway" id="UPA00223">
    <property type="reaction ID" value="UER01008"/>
</dbReference>
<dbReference type="Proteomes" id="UP000000626">
    <property type="component" value="Chromosome"/>
</dbReference>
<dbReference type="GO" id="GO:0047545">
    <property type="term" value="F:2-hydroxyglutarate dehydrogenase activity"/>
    <property type="evidence" value="ECO:0007669"/>
    <property type="project" value="TreeGrafter"/>
</dbReference>
<dbReference type="GO" id="GO:0008924">
    <property type="term" value="F:L-malate dehydrogenase (quinone) activity"/>
    <property type="evidence" value="ECO:0007669"/>
    <property type="project" value="UniProtKB-UniRule"/>
</dbReference>
<dbReference type="GO" id="GO:0006099">
    <property type="term" value="P:tricarboxylic acid cycle"/>
    <property type="evidence" value="ECO:0007669"/>
    <property type="project" value="UniProtKB-UniRule"/>
</dbReference>
<dbReference type="Gene3D" id="3.30.9.10">
    <property type="entry name" value="D-Amino Acid Oxidase, subunit A, domain 2"/>
    <property type="match status" value="1"/>
</dbReference>
<dbReference type="Gene3D" id="3.50.50.60">
    <property type="entry name" value="FAD/NAD(P)-binding domain"/>
    <property type="match status" value="1"/>
</dbReference>
<dbReference type="HAMAP" id="MF_00212">
    <property type="entry name" value="MQO"/>
    <property type="match status" value="1"/>
</dbReference>
<dbReference type="InterPro" id="IPR036188">
    <property type="entry name" value="FAD/NAD-bd_sf"/>
</dbReference>
<dbReference type="InterPro" id="IPR006231">
    <property type="entry name" value="MQO"/>
</dbReference>
<dbReference type="NCBIfam" id="TIGR01320">
    <property type="entry name" value="mal_quin_oxido"/>
    <property type="match status" value="1"/>
</dbReference>
<dbReference type="NCBIfam" id="NF003603">
    <property type="entry name" value="PRK05257.1-1"/>
    <property type="match status" value="1"/>
</dbReference>
<dbReference type="NCBIfam" id="NF003605">
    <property type="entry name" value="PRK05257.1-4"/>
    <property type="match status" value="1"/>
</dbReference>
<dbReference type="NCBIfam" id="NF003606">
    <property type="entry name" value="PRK05257.2-1"/>
    <property type="match status" value="1"/>
</dbReference>
<dbReference type="NCBIfam" id="NF003609">
    <property type="entry name" value="PRK05257.2-5"/>
    <property type="match status" value="1"/>
</dbReference>
<dbReference type="NCBIfam" id="NF003610">
    <property type="entry name" value="PRK05257.3-1"/>
    <property type="match status" value="1"/>
</dbReference>
<dbReference type="NCBIfam" id="NF003611">
    <property type="entry name" value="PRK05257.3-2"/>
    <property type="match status" value="1"/>
</dbReference>
<dbReference type="NCBIfam" id="NF009875">
    <property type="entry name" value="PRK13339.1"/>
    <property type="match status" value="1"/>
</dbReference>
<dbReference type="PANTHER" id="PTHR43104">
    <property type="entry name" value="L-2-HYDROXYGLUTARATE DEHYDROGENASE, MITOCHONDRIAL"/>
    <property type="match status" value="1"/>
</dbReference>
<dbReference type="PANTHER" id="PTHR43104:SF2">
    <property type="entry name" value="L-2-HYDROXYGLUTARATE DEHYDROGENASE, MITOCHONDRIAL"/>
    <property type="match status" value="1"/>
</dbReference>
<dbReference type="Pfam" id="PF06039">
    <property type="entry name" value="Mqo"/>
    <property type="match status" value="1"/>
</dbReference>
<dbReference type="SUPFAM" id="SSF51905">
    <property type="entry name" value="FAD/NAD(P)-binding domain"/>
    <property type="match status" value="1"/>
</dbReference>
<name>MQO_NEIMA</name>